<proteinExistence type="inferred from homology"/>
<gene>
    <name evidence="1" type="primary">hfq</name>
    <name type="ordered locus">Bxeno_A2818</name>
    <name type="ORF">Bxe_A1599</name>
</gene>
<feature type="chain" id="PRO_0000265145" description="RNA-binding protein Hfq">
    <location>
        <begin position="1"/>
        <end position="78"/>
    </location>
</feature>
<feature type="domain" description="Sm" evidence="2">
    <location>
        <begin position="10"/>
        <end position="69"/>
    </location>
</feature>
<sequence length="78" mass="8835">MSNKGQLLQDPFLNALRKEHVPVSIYLVNGIKLQGNIESFDQYVVLLRNTVTQMVYKHAISTVVPARPVNFHPDSEQS</sequence>
<comment type="function">
    <text evidence="1">RNA chaperone that binds small regulatory RNA (sRNAs) and mRNAs to facilitate mRNA translational regulation in response to envelope stress, environmental stress and changes in metabolite concentrations. Also binds with high specificity to tRNAs.</text>
</comment>
<comment type="subunit">
    <text evidence="1">Homohexamer.</text>
</comment>
<comment type="similarity">
    <text evidence="1">Belongs to the Hfq family.</text>
</comment>
<name>HFQ_PARXL</name>
<protein>
    <recommendedName>
        <fullName evidence="1">RNA-binding protein Hfq</fullName>
    </recommendedName>
</protein>
<accession>Q13X33</accession>
<keyword id="KW-1185">Reference proteome</keyword>
<keyword id="KW-0694">RNA-binding</keyword>
<keyword id="KW-0346">Stress response</keyword>
<organism>
    <name type="scientific">Paraburkholderia xenovorans (strain LB400)</name>
    <dbReference type="NCBI Taxonomy" id="266265"/>
    <lineage>
        <taxon>Bacteria</taxon>
        <taxon>Pseudomonadati</taxon>
        <taxon>Pseudomonadota</taxon>
        <taxon>Betaproteobacteria</taxon>
        <taxon>Burkholderiales</taxon>
        <taxon>Burkholderiaceae</taxon>
        <taxon>Paraburkholderia</taxon>
    </lineage>
</organism>
<evidence type="ECO:0000255" key="1">
    <source>
        <dbReference type="HAMAP-Rule" id="MF_00436"/>
    </source>
</evidence>
<evidence type="ECO:0000255" key="2">
    <source>
        <dbReference type="PROSITE-ProRule" id="PRU01346"/>
    </source>
</evidence>
<reference key="1">
    <citation type="journal article" date="2006" name="Proc. Natl. Acad. Sci. U.S.A.">
        <title>Burkholderia xenovorans LB400 harbors a multi-replicon, 9.73-Mbp genome shaped for versatility.</title>
        <authorList>
            <person name="Chain P.S.G."/>
            <person name="Denef V.J."/>
            <person name="Konstantinidis K.T."/>
            <person name="Vergez L.M."/>
            <person name="Agullo L."/>
            <person name="Reyes V.L."/>
            <person name="Hauser L."/>
            <person name="Cordova M."/>
            <person name="Gomez L."/>
            <person name="Gonzalez M."/>
            <person name="Land M."/>
            <person name="Lao V."/>
            <person name="Larimer F."/>
            <person name="LiPuma J.J."/>
            <person name="Mahenthiralingam E."/>
            <person name="Malfatti S.A."/>
            <person name="Marx C.J."/>
            <person name="Parnell J.J."/>
            <person name="Ramette A."/>
            <person name="Richardson P."/>
            <person name="Seeger M."/>
            <person name="Smith D."/>
            <person name="Spilker T."/>
            <person name="Sul W.J."/>
            <person name="Tsoi T.V."/>
            <person name="Ulrich L.E."/>
            <person name="Zhulin I.B."/>
            <person name="Tiedje J.M."/>
        </authorList>
    </citation>
    <scope>NUCLEOTIDE SEQUENCE [LARGE SCALE GENOMIC DNA]</scope>
    <source>
        <strain>LB400</strain>
    </source>
</reference>
<dbReference type="EMBL" id="CP000270">
    <property type="protein sequence ID" value="ABE31356.1"/>
    <property type="molecule type" value="Genomic_DNA"/>
</dbReference>
<dbReference type="RefSeq" id="WP_006051315.1">
    <property type="nucleotide sequence ID" value="NZ_CP008760.1"/>
</dbReference>
<dbReference type="SMR" id="Q13X33"/>
<dbReference type="STRING" id="266265.Bxe_A1599"/>
<dbReference type="GeneID" id="97307361"/>
<dbReference type="KEGG" id="bxb:DR64_3759"/>
<dbReference type="KEGG" id="bxe:Bxe_A1599"/>
<dbReference type="eggNOG" id="COG1923">
    <property type="taxonomic scope" value="Bacteria"/>
</dbReference>
<dbReference type="OrthoDB" id="9799751at2"/>
<dbReference type="Proteomes" id="UP000001817">
    <property type="component" value="Chromosome 1"/>
</dbReference>
<dbReference type="GO" id="GO:0005829">
    <property type="term" value="C:cytosol"/>
    <property type="evidence" value="ECO:0007669"/>
    <property type="project" value="TreeGrafter"/>
</dbReference>
<dbReference type="GO" id="GO:0003723">
    <property type="term" value="F:RNA binding"/>
    <property type="evidence" value="ECO:0007669"/>
    <property type="project" value="UniProtKB-UniRule"/>
</dbReference>
<dbReference type="GO" id="GO:0006355">
    <property type="term" value="P:regulation of DNA-templated transcription"/>
    <property type="evidence" value="ECO:0007669"/>
    <property type="project" value="InterPro"/>
</dbReference>
<dbReference type="GO" id="GO:0043487">
    <property type="term" value="P:regulation of RNA stability"/>
    <property type="evidence" value="ECO:0007669"/>
    <property type="project" value="TreeGrafter"/>
</dbReference>
<dbReference type="GO" id="GO:0045974">
    <property type="term" value="P:regulation of translation, ncRNA-mediated"/>
    <property type="evidence" value="ECO:0007669"/>
    <property type="project" value="TreeGrafter"/>
</dbReference>
<dbReference type="CDD" id="cd01716">
    <property type="entry name" value="Hfq"/>
    <property type="match status" value="1"/>
</dbReference>
<dbReference type="FunFam" id="2.30.30.100:FF:000001">
    <property type="entry name" value="RNA-binding protein Hfq"/>
    <property type="match status" value="1"/>
</dbReference>
<dbReference type="Gene3D" id="2.30.30.100">
    <property type="match status" value="1"/>
</dbReference>
<dbReference type="HAMAP" id="MF_00436">
    <property type="entry name" value="Hfq"/>
    <property type="match status" value="1"/>
</dbReference>
<dbReference type="InterPro" id="IPR005001">
    <property type="entry name" value="Hfq"/>
</dbReference>
<dbReference type="InterPro" id="IPR010920">
    <property type="entry name" value="LSM_dom_sf"/>
</dbReference>
<dbReference type="InterPro" id="IPR047575">
    <property type="entry name" value="Sm"/>
</dbReference>
<dbReference type="NCBIfam" id="TIGR02383">
    <property type="entry name" value="Hfq"/>
    <property type="match status" value="1"/>
</dbReference>
<dbReference type="NCBIfam" id="NF001602">
    <property type="entry name" value="PRK00395.1"/>
    <property type="match status" value="1"/>
</dbReference>
<dbReference type="PANTHER" id="PTHR34772">
    <property type="entry name" value="RNA-BINDING PROTEIN HFQ"/>
    <property type="match status" value="1"/>
</dbReference>
<dbReference type="PANTHER" id="PTHR34772:SF1">
    <property type="entry name" value="RNA-BINDING PROTEIN HFQ"/>
    <property type="match status" value="1"/>
</dbReference>
<dbReference type="Pfam" id="PF17209">
    <property type="entry name" value="Hfq"/>
    <property type="match status" value="1"/>
</dbReference>
<dbReference type="SUPFAM" id="SSF50182">
    <property type="entry name" value="Sm-like ribonucleoproteins"/>
    <property type="match status" value="1"/>
</dbReference>
<dbReference type="PROSITE" id="PS52002">
    <property type="entry name" value="SM"/>
    <property type="match status" value="1"/>
</dbReference>